<reference key="1">
    <citation type="journal article" date="1990" name="J. Bacteriol.">
        <title>Characterization of the genetic elements required for site-specific integration of plasmid pSE211 in Saccharopolyspora erythraea.</title>
        <authorList>
            <person name="Brown D.P."/>
            <person name="Idler K.B."/>
            <person name="Katz L."/>
        </authorList>
    </citation>
    <scope>NUCLEOTIDE SEQUENCE [GENOMIC DNA]</scope>
    <source>
        <strain>ER720</strain>
    </source>
</reference>
<sequence>MEQKRTRNPNGRSTIYLGNDGYWHGRVTMGIGDDGKPDRRHVKRKDKDEVVEEVGKLERERDSGNVRKKGQPWTVERWLTHWVESIAPLTCRYKTMRGYQTAVYKHLIPGLGAHRLDRIQNHPEYFEKFYLRMIESGLKPATAHQVHRTARTAFGEAYKRGRIQRNPVSIAKAPRVEEEEVEPLEVEDMQLVIKAALERRNGVRYVIALALGTRQGESLALKWPRLNRQKRTLRITKALQRQTWKHGCSDPHRCGATYHKTEPCKAACKRHTRACPPPCPPACTEHARWCPQRTGGGLVEVDVKSRAGRRTVTLPDQLFDLILKHEKLQGAERELAGTEWHDGEWMFTQPNGKPIDPRQDLDEWKAILVEAGVREARLHDARHTAATVLLVLGVPDRVVMELMGWSSVTMKQRYMHVIDSVRNDVADRLNTYFWGTN</sequence>
<organism>
    <name type="scientific">Saccharopolyspora erythraea</name>
    <name type="common">Streptomyces erythraeus</name>
    <dbReference type="NCBI Taxonomy" id="1836"/>
    <lineage>
        <taxon>Bacteria</taxon>
        <taxon>Bacillati</taxon>
        <taxon>Actinomycetota</taxon>
        <taxon>Actinomycetes</taxon>
        <taxon>Pseudonocardiales</taxon>
        <taxon>Pseudonocardiaceae</taxon>
        <taxon>Saccharopolyspora</taxon>
    </lineage>
</organism>
<protein>
    <recommendedName>
        <fullName>Integrase</fullName>
    </recommendedName>
    <alternativeName>
        <fullName>Recombinase</fullName>
    </alternativeName>
</protein>
<evidence type="ECO:0000255" key="1">
    <source>
        <dbReference type="PROSITE-ProRule" id="PRU01246"/>
    </source>
</evidence>
<evidence type="ECO:0000255" key="2">
    <source>
        <dbReference type="PROSITE-ProRule" id="PRU01248"/>
    </source>
</evidence>
<evidence type="ECO:0000305" key="3"/>
<proteinExistence type="inferred from homology"/>
<name>INTR_SACER</name>
<dbReference type="EMBL" id="M35138">
    <property type="protein sequence ID" value="AAA98345.1"/>
    <property type="molecule type" value="Genomic_DNA"/>
</dbReference>
<dbReference type="PIR" id="C35147">
    <property type="entry name" value="C35147"/>
</dbReference>
<dbReference type="RefSeq" id="WP_009946133.1">
    <property type="nucleotide sequence ID" value="NZ_JABNNH010000002.1"/>
</dbReference>
<dbReference type="SMR" id="P22877"/>
<dbReference type="OMA" id="RAFINQH"/>
<dbReference type="GO" id="GO:0003677">
    <property type="term" value="F:DNA binding"/>
    <property type="evidence" value="ECO:0007669"/>
    <property type="project" value="UniProtKB-KW"/>
</dbReference>
<dbReference type="GO" id="GO:0015074">
    <property type="term" value="P:DNA integration"/>
    <property type="evidence" value="ECO:0007669"/>
    <property type="project" value="UniProtKB-KW"/>
</dbReference>
<dbReference type="GO" id="GO:0006310">
    <property type="term" value="P:DNA recombination"/>
    <property type="evidence" value="ECO:0007669"/>
    <property type="project" value="UniProtKB-KW"/>
</dbReference>
<dbReference type="GO" id="GO:0075713">
    <property type="term" value="P:establishment of integrated proviral latency"/>
    <property type="evidence" value="ECO:0007669"/>
    <property type="project" value="UniProtKB-KW"/>
</dbReference>
<dbReference type="GO" id="GO:0046718">
    <property type="term" value="P:symbiont entry into host cell"/>
    <property type="evidence" value="ECO:0007669"/>
    <property type="project" value="UniProtKB-KW"/>
</dbReference>
<dbReference type="GO" id="GO:0044826">
    <property type="term" value="P:viral genome integration into host DNA"/>
    <property type="evidence" value="ECO:0007669"/>
    <property type="project" value="UniProtKB-KW"/>
</dbReference>
<dbReference type="CDD" id="cd01189">
    <property type="entry name" value="INT_ICEBs1_C_like"/>
    <property type="match status" value="1"/>
</dbReference>
<dbReference type="Gene3D" id="1.10.150.130">
    <property type="match status" value="1"/>
</dbReference>
<dbReference type="Gene3D" id="1.10.443.10">
    <property type="entry name" value="Intergrase catalytic core"/>
    <property type="match status" value="1"/>
</dbReference>
<dbReference type="InterPro" id="IPR044068">
    <property type="entry name" value="CB"/>
</dbReference>
<dbReference type="InterPro" id="IPR011010">
    <property type="entry name" value="DNA_brk_join_enz"/>
</dbReference>
<dbReference type="InterPro" id="IPR013762">
    <property type="entry name" value="Integrase-like_cat_sf"/>
</dbReference>
<dbReference type="InterPro" id="IPR002104">
    <property type="entry name" value="Integrase_catalytic"/>
</dbReference>
<dbReference type="InterPro" id="IPR010998">
    <property type="entry name" value="Integrase_recombinase_N"/>
</dbReference>
<dbReference type="InterPro" id="IPR004107">
    <property type="entry name" value="Integrase_SAM-like_N"/>
</dbReference>
<dbReference type="InterPro" id="IPR050090">
    <property type="entry name" value="Tyrosine_recombinase_XerCD"/>
</dbReference>
<dbReference type="PANTHER" id="PTHR30349:SF91">
    <property type="entry name" value="INTA PROTEIN"/>
    <property type="match status" value="1"/>
</dbReference>
<dbReference type="PANTHER" id="PTHR30349">
    <property type="entry name" value="PHAGE INTEGRASE-RELATED"/>
    <property type="match status" value="1"/>
</dbReference>
<dbReference type="Pfam" id="PF14659">
    <property type="entry name" value="Phage_int_SAM_3"/>
    <property type="match status" value="1"/>
</dbReference>
<dbReference type="Pfam" id="PF00589">
    <property type="entry name" value="Phage_integrase"/>
    <property type="match status" value="1"/>
</dbReference>
<dbReference type="SUPFAM" id="SSF56349">
    <property type="entry name" value="DNA breaking-rejoining enzymes"/>
    <property type="match status" value="1"/>
</dbReference>
<dbReference type="PROSITE" id="PS51900">
    <property type="entry name" value="CB"/>
    <property type="match status" value="1"/>
</dbReference>
<dbReference type="PROSITE" id="PS51898">
    <property type="entry name" value="TYR_RECOMBINASE"/>
    <property type="match status" value="1"/>
</dbReference>
<feature type="chain" id="PRO_0000197534" description="Integrase">
    <location>
        <begin position="1"/>
        <end position="437"/>
    </location>
</feature>
<feature type="domain" description="Core-binding (CB)" evidence="2">
    <location>
        <begin position="73"/>
        <end position="158"/>
    </location>
</feature>
<feature type="domain" description="Tyr recombinase" evidence="1">
    <location>
        <begin position="179"/>
        <end position="428"/>
    </location>
</feature>
<feature type="active site" evidence="1">
    <location>
        <position position="214"/>
    </location>
</feature>
<feature type="active site" evidence="1">
    <location>
        <position position="245"/>
    </location>
</feature>
<feature type="active site" evidence="1">
    <location>
        <position position="379"/>
    </location>
</feature>
<feature type="active site" evidence="1">
    <location>
        <position position="382"/>
    </location>
</feature>
<feature type="active site" evidence="1">
    <location>
        <position position="405"/>
    </location>
</feature>
<feature type="active site" description="O-(3'-phospho-DNA)-tyrosine intermediate" evidence="1">
    <location>
        <position position="414"/>
    </location>
</feature>
<comment type="function">
    <text>Is a recombinase (or integrase), catalyzing the cutting and rejoining of the recombining DNA molecules.</text>
</comment>
<comment type="similarity">
    <text evidence="3">Belongs to the 'phage' integrase family.</text>
</comment>
<geneLocation type="plasmid">
    <name>pSE211</name>
</geneLocation>
<gene>
    <name type="primary">int</name>
</gene>
<accession>P22877</accession>
<keyword id="KW-0229">DNA integration</keyword>
<keyword id="KW-0233">DNA recombination</keyword>
<keyword id="KW-0238">DNA-binding</keyword>
<keyword id="KW-0614">Plasmid</keyword>
<keyword id="KW-1179">Viral genome integration</keyword>
<keyword id="KW-1160">Virus entry into host cell</keyword>